<name>STS1_TALMQ</name>
<proteinExistence type="inferred from homology"/>
<feature type="chain" id="PRO_0000409424" description="Tethering factor for nuclear proteasome sts1">
    <location>
        <begin position="1"/>
        <end position="312"/>
    </location>
</feature>
<feature type="region of interest" description="Disordered" evidence="2">
    <location>
        <begin position="1"/>
        <end position="83"/>
    </location>
</feature>
<feature type="compositionally biased region" description="Polar residues" evidence="2">
    <location>
        <begin position="20"/>
        <end position="34"/>
    </location>
</feature>
<protein>
    <recommendedName>
        <fullName>Tethering factor for nuclear proteasome sts1</fullName>
    </recommendedName>
</protein>
<dbReference type="EMBL" id="DS995899">
    <property type="protein sequence ID" value="EEA27871.1"/>
    <property type="molecule type" value="Genomic_DNA"/>
</dbReference>
<dbReference type="RefSeq" id="XP_002144386.1">
    <property type="nucleotide sequence ID" value="XM_002144350.1"/>
</dbReference>
<dbReference type="SMR" id="B6Q1K5"/>
<dbReference type="STRING" id="441960.B6Q1K5"/>
<dbReference type="VEuPathDB" id="FungiDB:PMAA_027120"/>
<dbReference type="HOGENOM" id="CLU_033658_0_0_1"/>
<dbReference type="OrthoDB" id="6096at28568"/>
<dbReference type="PhylomeDB" id="B6Q1K5"/>
<dbReference type="Proteomes" id="UP000001294">
    <property type="component" value="Unassembled WGS sequence"/>
</dbReference>
<dbReference type="GO" id="GO:0005737">
    <property type="term" value="C:cytoplasm"/>
    <property type="evidence" value="ECO:0007669"/>
    <property type="project" value="UniProtKB-SubCell"/>
</dbReference>
<dbReference type="GO" id="GO:0031965">
    <property type="term" value="C:nuclear membrane"/>
    <property type="evidence" value="ECO:0007669"/>
    <property type="project" value="TreeGrafter"/>
</dbReference>
<dbReference type="GO" id="GO:0070628">
    <property type="term" value="F:proteasome binding"/>
    <property type="evidence" value="ECO:0007669"/>
    <property type="project" value="TreeGrafter"/>
</dbReference>
<dbReference type="GO" id="GO:0071630">
    <property type="term" value="P:nuclear protein quality control by the ubiquitin-proteasome system"/>
    <property type="evidence" value="ECO:0007669"/>
    <property type="project" value="InterPro"/>
</dbReference>
<dbReference type="GO" id="GO:0031144">
    <property type="term" value="P:proteasome localization"/>
    <property type="evidence" value="ECO:0007669"/>
    <property type="project" value="InterPro"/>
</dbReference>
<dbReference type="GO" id="GO:0015031">
    <property type="term" value="P:protein transport"/>
    <property type="evidence" value="ECO:0007669"/>
    <property type="project" value="UniProtKB-KW"/>
</dbReference>
<dbReference type="FunFam" id="1.20.58.1590:FF:000001">
    <property type="entry name" value="Tethering factor for nuclear proteasome STS1"/>
    <property type="match status" value="1"/>
</dbReference>
<dbReference type="Gene3D" id="1.20.58.1590">
    <property type="entry name" value="Tethering factor for nuclear proteasome Cut8/Sts1"/>
    <property type="match status" value="1"/>
</dbReference>
<dbReference type="InterPro" id="IPR013868">
    <property type="entry name" value="Cut8/Sts1_fam"/>
</dbReference>
<dbReference type="InterPro" id="IPR038422">
    <property type="entry name" value="Cut8/Sts1_sf"/>
</dbReference>
<dbReference type="PANTHER" id="PTHR28032">
    <property type="entry name" value="FI02826P"/>
    <property type="match status" value="1"/>
</dbReference>
<dbReference type="PANTHER" id="PTHR28032:SF1">
    <property type="entry name" value="FI02826P"/>
    <property type="match status" value="1"/>
</dbReference>
<dbReference type="Pfam" id="PF08559">
    <property type="entry name" value="Cut8"/>
    <property type="match status" value="1"/>
</dbReference>
<sequence length="312" mass="34286">MNSLVATPPVPPHFYEHSRFSPSRSMSTPVQQNSNRKRKAEDDGNDVDVRMSASPTNSPAFTPRPLPNRQMKRSRPNVSGRPLSLPRLLETLDTEALRSVLQAVCQRHPELGDEVVHTAPRPSVASTLQVLRNYQSTLQTSIPLGSGEYLSDYAYNRVKQHLFSLLEALSDFTPHFLPPNESQTSVSLTYLDGATDIIHGLPKWQTPRHNIGRDSAYEEIGKAWVLVIREAAKRGGGIQLQYGGWDQKLAKHNETSGGKLQDAVNELRNSLGWMGSSALPGAGASGGDQISIREQLLSGTYGMGMPLKVGPW</sequence>
<keyword id="KW-0963">Cytoplasm</keyword>
<keyword id="KW-0539">Nucleus</keyword>
<keyword id="KW-0653">Protein transport</keyword>
<keyword id="KW-1185">Reference proteome</keyword>
<keyword id="KW-0813">Transport</keyword>
<comment type="function">
    <text evidence="1">Involved in ubiquitin-mediated protein degradation. Regulatory factor in the ubiquitin/proteasome pathway that controls the turnover of proteasome substrates. Targets proteasomes to the nucleus and facilitates the degradation of nuclear proteins (By similarity).</text>
</comment>
<comment type="subunit">
    <text evidence="1">Binds the proteasome.</text>
</comment>
<comment type="subcellular location">
    <subcellularLocation>
        <location evidence="1">Cytoplasm</location>
    </subcellularLocation>
    <subcellularLocation>
        <location evidence="1">Nucleus</location>
    </subcellularLocation>
</comment>
<comment type="similarity">
    <text evidence="3">Belongs to the cut8/STS1 family.</text>
</comment>
<accession>B6Q1K5</accession>
<gene>
    <name type="primary">sts1</name>
    <name type="ORF">PMAA_027120</name>
</gene>
<organism>
    <name type="scientific">Talaromyces marneffei (strain ATCC 18224 / CBS 334.59 / QM 7333)</name>
    <name type="common">Penicillium marneffei</name>
    <dbReference type="NCBI Taxonomy" id="441960"/>
    <lineage>
        <taxon>Eukaryota</taxon>
        <taxon>Fungi</taxon>
        <taxon>Dikarya</taxon>
        <taxon>Ascomycota</taxon>
        <taxon>Pezizomycotina</taxon>
        <taxon>Eurotiomycetes</taxon>
        <taxon>Eurotiomycetidae</taxon>
        <taxon>Eurotiales</taxon>
        <taxon>Trichocomaceae</taxon>
        <taxon>Talaromyces</taxon>
        <taxon>Talaromyces sect. Talaromyces</taxon>
    </lineage>
</organism>
<evidence type="ECO:0000250" key="1"/>
<evidence type="ECO:0000256" key="2">
    <source>
        <dbReference type="SAM" id="MobiDB-lite"/>
    </source>
</evidence>
<evidence type="ECO:0000305" key="3"/>
<reference key="1">
    <citation type="journal article" date="2015" name="Genome Announc.">
        <title>Genome sequence of the AIDS-associated pathogen Penicillium marneffei (ATCC18224) and its near taxonomic relative Talaromyces stipitatus (ATCC10500).</title>
        <authorList>
            <person name="Nierman W.C."/>
            <person name="Fedorova-Abrams N.D."/>
            <person name="Andrianopoulos A."/>
        </authorList>
    </citation>
    <scope>NUCLEOTIDE SEQUENCE [LARGE SCALE GENOMIC DNA]</scope>
    <source>
        <strain>ATCC 18224 / CBS 334.59 / QM 7333</strain>
    </source>
</reference>